<reference key="1">
    <citation type="journal article" date="2011" name="J. Bacteriol.">
        <title>Comparative genomics of 28 Salmonella enterica isolates: evidence for CRISPR-mediated adaptive sublineage evolution.</title>
        <authorList>
            <person name="Fricke W.F."/>
            <person name="Mammel M.K."/>
            <person name="McDermott P.F."/>
            <person name="Tartera C."/>
            <person name="White D.G."/>
            <person name="Leclerc J.E."/>
            <person name="Ravel J."/>
            <person name="Cebula T.A."/>
        </authorList>
    </citation>
    <scope>NUCLEOTIDE SEQUENCE [LARGE SCALE GENOMIC DNA]</scope>
    <source>
        <strain>CVM19633</strain>
    </source>
</reference>
<proteinExistence type="inferred from homology"/>
<dbReference type="EMBL" id="CP001127">
    <property type="protein sequence ID" value="ACF92433.1"/>
    <property type="molecule type" value="Genomic_DNA"/>
</dbReference>
<dbReference type="RefSeq" id="WP_001241346.1">
    <property type="nucleotide sequence ID" value="NC_011094.1"/>
</dbReference>
<dbReference type="SMR" id="B4TRX7"/>
<dbReference type="KEGG" id="sew:SeSA_A2785"/>
<dbReference type="HOGENOM" id="CLU_107144_0_0_6"/>
<dbReference type="Proteomes" id="UP000001865">
    <property type="component" value="Chromosome"/>
</dbReference>
<dbReference type="GO" id="GO:0005829">
    <property type="term" value="C:cytosol"/>
    <property type="evidence" value="ECO:0007669"/>
    <property type="project" value="TreeGrafter"/>
</dbReference>
<dbReference type="GO" id="GO:0051537">
    <property type="term" value="F:2 iron, 2 sulfur cluster binding"/>
    <property type="evidence" value="ECO:0007669"/>
    <property type="project" value="UniProtKB-KW"/>
</dbReference>
<dbReference type="GO" id="GO:0003700">
    <property type="term" value="F:DNA-binding transcription factor activity"/>
    <property type="evidence" value="ECO:0007669"/>
    <property type="project" value="UniProtKB-UniRule"/>
</dbReference>
<dbReference type="GO" id="GO:0003690">
    <property type="term" value="F:double-stranded DNA binding"/>
    <property type="evidence" value="ECO:0007669"/>
    <property type="project" value="UniProtKB-UniRule"/>
</dbReference>
<dbReference type="GO" id="GO:0005506">
    <property type="term" value="F:iron ion binding"/>
    <property type="evidence" value="ECO:0007669"/>
    <property type="project" value="UniProtKB-UniRule"/>
</dbReference>
<dbReference type="FunFam" id="1.10.10.10:FF:000026">
    <property type="entry name" value="HTH-type transcriptional regulator IscR"/>
    <property type="match status" value="1"/>
</dbReference>
<dbReference type="Gene3D" id="1.10.10.10">
    <property type="entry name" value="Winged helix-like DNA-binding domain superfamily/Winged helix DNA-binding domain"/>
    <property type="match status" value="1"/>
</dbReference>
<dbReference type="HAMAP" id="MF_01176">
    <property type="entry name" value="HTH_type_IscR"/>
    <property type="match status" value="1"/>
</dbReference>
<dbReference type="InterPro" id="IPR010242">
    <property type="entry name" value="TF_HTH_IscR"/>
</dbReference>
<dbReference type="InterPro" id="IPR030489">
    <property type="entry name" value="TR_Rrf2-type_CS"/>
</dbReference>
<dbReference type="InterPro" id="IPR000944">
    <property type="entry name" value="Tscrpt_reg_Rrf2"/>
</dbReference>
<dbReference type="InterPro" id="IPR036388">
    <property type="entry name" value="WH-like_DNA-bd_sf"/>
</dbReference>
<dbReference type="InterPro" id="IPR036390">
    <property type="entry name" value="WH_DNA-bd_sf"/>
</dbReference>
<dbReference type="NCBIfam" id="TIGR02010">
    <property type="entry name" value="IscR"/>
    <property type="match status" value="1"/>
</dbReference>
<dbReference type="NCBIfam" id="NF008110">
    <property type="entry name" value="PRK10857.1"/>
    <property type="match status" value="1"/>
</dbReference>
<dbReference type="NCBIfam" id="TIGR00738">
    <property type="entry name" value="rrf2_super"/>
    <property type="match status" value="1"/>
</dbReference>
<dbReference type="PANTHER" id="PTHR33221:SF5">
    <property type="entry name" value="HTH-TYPE TRANSCRIPTIONAL REGULATOR ISCR"/>
    <property type="match status" value="1"/>
</dbReference>
<dbReference type="PANTHER" id="PTHR33221">
    <property type="entry name" value="WINGED HELIX-TURN-HELIX TRANSCRIPTIONAL REGULATOR, RRF2 FAMILY"/>
    <property type="match status" value="1"/>
</dbReference>
<dbReference type="Pfam" id="PF02082">
    <property type="entry name" value="Rrf2"/>
    <property type="match status" value="1"/>
</dbReference>
<dbReference type="SUPFAM" id="SSF46785">
    <property type="entry name" value="Winged helix' DNA-binding domain"/>
    <property type="match status" value="1"/>
</dbReference>
<dbReference type="PROSITE" id="PS01332">
    <property type="entry name" value="HTH_RRF2_1"/>
    <property type="match status" value="1"/>
</dbReference>
<dbReference type="PROSITE" id="PS51197">
    <property type="entry name" value="HTH_RRF2_2"/>
    <property type="match status" value="1"/>
</dbReference>
<evidence type="ECO:0000255" key="1">
    <source>
        <dbReference type="HAMAP-Rule" id="MF_01176"/>
    </source>
</evidence>
<comment type="function">
    <text evidence="1">Regulates the transcription of several operons and genes involved in the biogenesis of Fe-S clusters and Fe-S-containing proteins.</text>
</comment>
<comment type="cofactor">
    <cofactor evidence="1">
        <name>[2Fe-2S] cluster</name>
        <dbReference type="ChEBI" id="CHEBI:190135"/>
    </cofactor>
    <text evidence="1">Binds 1 [2Fe-2S] cluster.</text>
</comment>
<keyword id="KW-0001">2Fe-2S</keyword>
<keyword id="KW-0010">Activator</keyword>
<keyword id="KW-0238">DNA-binding</keyword>
<keyword id="KW-0408">Iron</keyword>
<keyword id="KW-0411">Iron-sulfur</keyword>
<keyword id="KW-0479">Metal-binding</keyword>
<keyword id="KW-0678">Repressor</keyword>
<keyword id="KW-0804">Transcription</keyword>
<keyword id="KW-0805">Transcription regulation</keyword>
<sequence length="164" mass="17391">MRLTSKGRYAVTAMLDVALNSEAGPVPLADISERQGISLSYLEQLFSRLRKNGLVSSVRGPGGGYLLGKDAGSIAVGEVISAVDESVDATRCQGKGGCQGGDKCLTHALWRDLSDRLTGFLNNITLGELVNNQEVLDVSGRQHTHDAPRASGRAQDAIDVKLRA</sequence>
<name>ISCR_SALSV</name>
<accession>B4TRX7</accession>
<organism>
    <name type="scientific">Salmonella schwarzengrund (strain CVM19633)</name>
    <dbReference type="NCBI Taxonomy" id="439843"/>
    <lineage>
        <taxon>Bacteria</taxon>
        <taxon>Pseudomonadati</taxon>
        <taxon>Pseudomonadota</taxon>
        <taxon>Gammaproteobacteria</taxon>
        <taxon>Enterobacterales</taxon>
        <taxon>Enterobacteriaceae</taxon>
        <taxon>Salmonella</taxon>
    </lineage>
</organism>
<feature type="chain" id="PRO_1000138111" description="HTH-type transcriptional regulator IscR">
    <location>
        <begin position="1"/>
        <end position="164"/>
    </location>
</feature>
<feature type="domain" description="HTH rrf2-type" evidence="1">
    <location>
        <begin position="2"/>
        <end position="131"/>
    </location>
</feature>
<feature type="DNA-binding region" description="H-T-H motif" evidence="1">
    <location>
        <begin position="28"/>
        <end position="51"/>
    </location>
</feature>
<feature type="binding site" evidence="1">
    <location>
        <position position="92"/>
    </location>
    <ligand>
        <name>[2Fe-2S] cluster</name>
        <dbReference type="ChEBI" id="CHEBI:190135"/>
    </ligand>
</feature>
<feature type="binding site" evidence="1">
    <location>
        <position position="98"/>
    </location>
    <ligand>
        <name>[2Fe-2S] cluster</name>
        <dbReference type="ChEBI" id="CHEBI:190135"/>
    </ligand>
</feature>
<feature type="binding site" evidence="1">
    <location>
        <position position="104"/>
    </location>
    <ligand>
        <name>[2Fe-2S] cluster</name>
        <dbReference type="ChEBI" id="CHEBI:190135"/>
    </ligand>
</feature>
<gene>
    <name evidence="1" type="primary">iscR</name>
    <name type="ordered locus">SeSA_A2785</name>
</gene>
<protein>
    <recommendedName>
        <fullName evidence="1">HTH-type transcriptional regulator IscR</fullName>
    </recommendedName>
</protein>